<organism>
    <name type="scientific">Mus musculus</name>
    <name type="common">Mouse</name>
    <dbReference type="NCBI Taxonomy" id="10090"/>
    <lineage>
        <taxon>Eukaryota</taxon>
        <taxon>Metazoa</taxon>
        <taxon>Chordata</taxon>
        <taxon>Craniata</taxon>
        <taxon>Vertebrata</taxon>
        <taxon>Euteleostomi</taxon>
        <taxon>Mammalia</taxon>
        <taxon>Eutheria</taxon>
        <taxon>Euarchontoglires</taxon>
        <taxon>Glires</taxon>
        <taxon>Rodentia</taxon>
        <taxon>Myomorpha</taxon>
        <taxon>Muroidea</taxon>
        <taxon>Muridae</taxon>
        <taxon>Murinae</taxon>
        <taxon>Mus</taxon>
        <taxon>Mus</taxon>
    </lineage>
</organism>
<feature type="chain" id="PRO_0000419259" description="Zinc finger protein 335">
    <location>
        <begin position="1"/>
        <end position="1337"/>
    </location>
</feature>
<feature type="zinc finger region" description="C2H2-type 1" evidence="3">
    <location>
        <begin position="248"/>
        <end position="271"/>
    </location>
</feature>
<feature type="zinc finger region" description="C2H2-type 2" evidence="3">
    <location>
        <begin position="466"/>
        <end position="488"/>
    </location>
</feature>
<feature type="zinc finger region" description="C2H2-type 3" evidence="3">
    <location>
        <begin position="496"/>
        <end position="518"/>
    </location>
</feature>
<feature type="zinc finger region" description="C2H2-type 4" evidence="3">
    <location>
        <begin position="524"/>
        <end position="546"/>
    </location>
</feature>
<feature type="zinc finger region" description="C2H2-type 5" evidence="3">
    <location>
        <begin position="563"/>
        <end position="585"/>
    </location>
</feature>
<feature type="zinc finger region" description="C2H2-type 6" evidence="3">
    <location>
        <begin position="591"/>
        <end position="613"/>
    </location>
</feature>
<feature type="zinc finger region" description="C2H2-type 7" evidence="3">
    <location>
        <begin position="622"/>
        <end position="644"/>
    </location>
</feature>
<feature type="zinc finger region" description="C2H2-type 8" evidence="3">
    <location>
        <begin position="650"/>
        <end position="673"/>
    </location>
</feature>
<feature type="zinc finger region" description="C2H2-type 9" evidence="3">
    <location>
        <begin position="679"/>
        <end position="702"/>
    </location>
</feature>
<feature type="zinc finger region" description="C2H2-type 10" evidence="3">
    <location>
        <begin position="1019"/>
        <end position="1041"/>
    </location>
</feature>
<feature type="zinc finger region" description="C2H2-type 11" evidence="3">
    <location>
        <begin position="1047"/>
        <end position="1069"/>
    </location>
</feature>
<feature type="zinc finger region" description="C2H2-type 12" evidence="3">
    <location>
        <begin position="1075"/>
        <end position="1097"/>
    </location>
</feature>
<feature type="zinc finger region" description="C2H2-type 13" evidence="3">
    <location>
        <begin position="1103"/>
        <end position="1126"/>
    </location>
</feature>
<feature type="region of interest" description="Disordered" evidence="4">
    <location>
        <begin position="1"/>
        <end position="108"/>
    </location>
</feature>
<feature type="region of interest" description="Disordered" evidence="4">
    <location>
        <begin position="198"/>
        <end position="226"/>
    </location>
</feature>
<feature type="region of interest" description="Disordered" evidence="4">
    <location>
        <begin position="278"/>
        <end position="444"/>
    </location>
</feature>
<feature type="region of interest" description="Disordered" evidence="4">
    <location>
        <begin position="733"/>
        <end position="767"/>
    </location>
</feature>
<feature type="region of interest" description="Disordered" evidence="4">
    <location>
        <begin position="963"/>
        <end position="999"/>
    </location>
</feature>
<feature type="compositionally biased region" description="Low complexity" evidence="4">
    <location>
        <begin position="31"/>
        <end position="45"/>
    </location>
</feature>
<feature type="compositionally biased region" description="Low complexity" evidence="4">
    <location>
        <begin position="54"/>
        <end position="63"/>
    </location>
</feature>
<feature type="compositionally biased region" description="Acidic residues" evidence="4">
    <location>
        <begin position="302"/>
        <end position="332"/>
    </location>
</feature>
<feature type="compositionally biased region" description="Basic residues" evidence="4">
    <location>
        <begin position="351"/>
        <end position="362"/>
    </location>
</feature>
<feature type="compositionally biased region" description="Basic and acidic residues" evidence="4">
    <location>
        <begin position="363"/>
        <end position="372"/>
    </location>
</feature>
<feature type="compositionally biased region" description="Polar residues" evidence="4">
    <location>
        <begin position="378"/>
        <end position="388"/>
    </location>
</feature>
<feature type="compositionally biased region" description="Pro residues" evidence="4">
    <location>
        <begin position="741"/>
        <end position="756"/>
    </location>
</feature>
<feature type="modified residue" description="Phosphoserine" evidence="1">
    <location>
        <position position="976"/>
    </location>
</feature>
<feature type="modified residue" description="Phosphoserine" evidence="2">
    <location>
        <position position="1007"/>
    </location>
</feature>
<feature type="modified residue" description="Phosphoserine" evidence="2">
    <location>
        <position position="1149"/>
    </location>
</feature>
<feature type="cross-link" description="Glycyl lysine isopeptide (Lys-Gly) (interchain with G-Cter in SUMO2)" evidence="2">
    <location>
        <position position="1022"/>
    </location>
</feature>
<feature type="sequence conflict" description="In Ref. 1; BAE34126 and 3; AAI57955/AAI51014." evidence="6" ref="1 3">
    <original>E</original>
    <variation>EE</variation>
    <location>
        <position position="309"/>
    </location>
</feature>
<feature type="sequence conflict" description="In Ref. 1; BAE34126 and 3; AAI57955/AAI51014." evidence="6" ref="1 3">
    <original>G</original>
    <variation>D</variation>
    <location>
        <position position="400"/>
    </location>
</feature>
<feature type="sequence conflict" description="In Ref. 1; BAE34126." evidence="6" ref="1">
    <original>A</original>
    <variation>V</variation>
    <location>
        <position position="490"/>
    </location>
</feature>
<feature type="sequence conflict" description="In Ref. 1; BAE34126." evidence="6" ref="1">
    <original>C</original>
    <variation>G</variation>
    <location>
        <position position="526"/>
    </location>
</feature>
<feature type="sequence conflict" description="In Ref. 1; BAE34126." evidence="6" ref="1">
    <original>R</original>
    <variation>C</variation>
    <location>
        <position position="712"/>
    </location>
</feature>
<feature type="sequence conflict" description="In Ref. 1; BAE34126 and 3; AAI57955/AAI51014." evidence="6" ref="1 3">
    <original>A</original>
    <variation>E</variation>
    <location>
        <position position="856"/>
    </location>
</feature>
<feature type="sequence conflict" description="In Ref. 1; BAE34126." evidence="6" ref="1">
    <original>S</original>
    <variation>G</variation>
    <location>
        <position position="949"/>
    </location>
</feature>
<feature type="sequence conflict" description="In Ref. 1; BAE34126 and 3; AAI57955/AAI51014." evidence="6" ref="1 3">
    <original>T</original>
    <variation>I</variation>
    <location>
        <position position="1135"/>
    </location>
</feature>
<accession>A2A5K6</accession>
<accession>B2RXR9</accession>
<accession>Q3TZT1</accession>
<sequence length="1337" mass="145603">MEENEVESSSDAAPRPGQPEEPSESGLGVCTSEAVSADSSDAATVPGLTEADDSGVGQSSDGGNHSVEEVSESISTDPLPHGCLPDSSSVSRGPVAEMPGGPPALVHSSVLPDPSMLVSDCTASSSDLGSAIDKIIESTIGPDLIQSCITVTSGEEGGAETTQYLILQGPDDGAPMASSMSTSTLANSLAAIEALADGPTSTSACLEPPEEPQGDPSSVAQQPPAPVTEELDLQSLEAMMEVVVVQQFKCKMCQYRSSTKATLLRHMRERHFRPALAAAAAATGKRGRVRKWGTSTKTTEEDRPEEEEEDDDIVDAGAIDDLEEDSDYNPAEDEPRGRQLRLQRPTPSTPRPRRRPGRPRKLPRLETSDLHDGVGQPLVSSQSTQSPPELQDLEAPSSSGLRALGKVGRGLVESGVSQSDAENAAPSCQDEADAPPRRRGRPSRRFLGKKYRKYYYKSPKPLLRPYLCRICGSRFLSHEDLRFHVNSHEAGDPQLFRCLQCSYRSRRWSSLKEHMFNHVGSKPYKCDECSYTSVYRKDVIRHAAVHSQDRKKRPDPTPKLSSFPCPVCGRVYPMQKRLTQHMKTHSTEKPHMCDKCGKSFKKRYTFKMHLLTHIQAVANRRFKCEFCEFVCEDKKALLNHQLSHVSDKPFKCSFCPYRTFREDFLLSHVAVKHTGAKPFACEYCHFSTRHKKNLRLHVRCRHANSFEEWGRRHPEEPPSRRRPFFSLQQIEELKQQHSTAPGPPLSSPGPEAPQEPAPFQSPETPPLLCPDALGGTTIIYQQGAEESTAVATQTALDLLLNMSAQRELGATALQVAVVKSEGIEAELTSTGGQPSPEDTTPRVVTLHMAESGSSVAAESQLGPSDLQQIALPSGPFGGASYSVITAPPVEGRTSASGPPYREEPPGEAAQAVVVSDTLKEAGTHYIMAADGTQLHHIELTADGSISFPSPDTLAPGTKWPLLQCGGPPRDGSEVLSPTKTHHMGGSQGSSTPPPAASHTLGLVVPQSPPSAAASSTKKFSCKVCSEAFPSRAEMESHKRAHAGPAAFKCPDCPFSARQWPEVRAHMAQHSSLRPHQCNQCSFASKNKKDLRRHMLTHTNEKPFSCHVCGQRFNRNGHLKFHIQRLHSIDGRKTGTSTARAPAQTIILNSEEETLATLHTAFQSSHGVLGTERLQQALSQEHIIVAQEQTVTNQEEATYIQEITADGQTVQHLVTSDNQVQYIISQDGVQHLLPQEYVVVPDGHHIQVQEGQITHIQYEQGTPFLQESQIQYVPVSPSQQLVTQAQLEAAAHSAVTAVADAAMAQAQGLFGTEEAVPEQIHQLQHQGIEYDVITLSDD</sequence>
<gene>
    <name type="primary">Znf335</name>
    <name type="synonym">Zfp335</name>
</gene>
<evidence type="ECO:0000250" key="1">
    <source>
        <dbReference type="UniProtKB" id="G3V893"/>
    </source>
</evidence>
<evidence type="ECO:0000250" key="2">
    <source>
        <dbReference type="UniProtKB" id="Q9H4Z2"/>
    </source>
</evidence>
<evidence type="ECO:0000255" key="3">
    <source>
        <dbReference type="PROSITE-ProRule" id="PRU00042"/>
    </source>
</evidence>
<evidence type="ECO:0000256" key="4">
    <source>
        <dbReference type="SAM" id="MobiDB-lite"/>
    </source>
</evidence>
<evidence type="ECO:0000269" key="5">
    <source>
    </source>
</evidence>
<evidence type="ECO:0000305" key="6"/>
<proteinExistence type="evidence at protein level"/>
<name>ZN335_MOUSE</name>
<dbReference type="EMBL" id="AK157577">
    <property type="protein sequence ID" value="BAE34126.1"/>
    <property type="molecule type" value="mRNA"/>
</dbReference>
<dbReference type="EMBL" id="AL591495">
    <property type="status" value="NOT_ANNOTATED_CDS"/>
    <property type="molecule type" value="Genomic_DNA"/>
</dbReference>
<dbReference type="EMBL" id="BC151013">
    <property type="protein sequence ID" value="AAI51014.1"/>
    <property type="molecule type" value="mRNA"/>
</dbReference>
<dbReference type="EMBL" id="BC157954">
    <property type="protein sequence ID" value="AAI57955.1"/>
    <property type="molecule type" value="mRNA"/>
</dbReference>
<dbReference type="CCDS" id="CCDS38331.1"/>
<dbReference type="RefSeq" id="NP_950192.2">
    <property type="nucleotide sequence ID" value="NM_199027.2"/>
</dbReference>
<dbReference type="SMR" id="A2A5K6"/>
<dbReference type="FunCoup" id="A2A5K6">
    <property type="interactions" value="3153"/>
</dbReference>
<dbReference type="STRING" id="10090.ENSMUSP00000038298"/>
<dbReference type="GlyGen" id="A2A5K6">
    <property type="glycosylation" value="3 sites, 1 O-linked glycan (1 site)"/>
</dbReference>
<dbReference type="iPTMnet" id="A2A5K6"/>
<dbReference type="PhosphoSitePlus" id="A2A5K6"/>
<dbReference type="PaxDb" id="10090-ENSMUSP00000038298"/>
<dbReference type="PeptideAtlas" id="A2A5K6"/>
<dbReference type="ProteomicsDB" id="275283"/>
<dbReference type="Pumba" id="A2A5K6"/>
<dbReference type="Antibodypedia" id="27906">
    <property type="antibodies" value="115 antibodies from 27 providers"/>
</dbReference>
<dbReference type="Ensembl" id="ENSMUST00000041361.14">
    <property type="protein sequence ID" value="ENSMUSP00000038298.8"/>
    <property type="gene ID" value="ENSMUSG00000039834.18"/>
</dbReference>
<dbReference type="GeneID" id="329559"/>
<dbReference type="KEGG" id="mmu:329559"/>
<dbReference type="UCSC" id="uc008nwr.1">
    <property type="organism name" value="mouse"/>
</dbReference>
<dbReference type="AGR" id="MGI:2682313"/>
<dbReference type="CTD" id="329559"/>
<dbReference type="MGI" id="MGI:2682313">
    <property type="gene designation" value="Zfp335"/>
</dbReference>
<dbReference type="VEuPathDB" id="HostDB:ENSMUSG00000039834"/>
<dbReference type="eggNOG" id="KOG1721">
    <property type="taxonomic scope" value="Eukaryota"/>
</dbReference>
<dbReference type="GeneTree" id="ENSGT00940000158508"/>
<dbReference type="HOGENOM" id="CLU_006340_0_0_1"/>
<dbReference type="InParanoid" id="A2A5K6"/>
<dbReference type="OMA" id="QHMRERH"/>
<dbReference type="OrthoDB" id="8117402at2759"/>
<dbReference type="PhylomeDB" id="A2A5K6"/>
<dbReference type="TreeFam" id="TF332472"/>
<dbReference type="BioGRID-ORCS" id="329559">
    <property type="hits" value="7 hits in 80 CRISPR screens"/>
</dbReference>
<dbReference type="ChiTaRS" id="Zfp335">
    <property type="organism name" value="mouse"/>
</dbReference>
<dbReference type="PRO" id="PR:A2A5K6"/>
<dbReference type="Proteomes" id="UP000000589">
    <property type="component" value="Chromosome 2"/>
</dbReference>
<dbReference type="RNAct" id="A2A5K6">
    <property type="molecule type" value="protein"/>
</dbReference>
<dbReference type="Bgee" id="ENSMUSG00000039834">
    <property type="expression patterns" value="Expressed in granulocyte and 205 other cell types or tissues"/>
</dbReference>
<dbReference type="ExpressionAtlas" id="A2A5K6">
    <property type="expression patterns" value="baseline and differential"/>
</dbReference>
<dbReference type="GO" id="GO:0035097">
    <property type="term" value="C:histone methyltransferase complex"/>
    <property type="evidence" value="ECO:0007669"/>
    <property type="project" value="Ensembl"/>
</dbReference>
<dbReference type="GO" id="GO:0005634">
    <property type="term" value="C:nucleus"/>
    <property type="evidence" value="ECO:0000314"/>
    <property type="project" value="UniProtKB"/>
</dbReference>
<dbReference type="GO" id="GO:1990226">
    <property type="term" value="F:histone methyltransferase binding"/>
    <property type="evidence" value="ECO:0000314"/>
    <property type="project" value="MGI"/>
</dbReference>
<dbReference type="GO" id="GO:0000978">
    <property type="term" value="F:RNA polymerase II cis-regulatory region sequence-specific DNA binding"/>
    <property type="evidence" value="ECO:0000314"/>
    <property type="project" value="MGI"/>
</dbReference>
<dbReference type="GO" id="GO:0000976">
    <property type="term" value="F:transcription cis-regulatory region binding"/>
    <property type="evidence" value="ECO:0000314"/>
    <property type="project" value="UniProtKB"/>
</dbReference>
<dbReference type="GO" id="GO:0008270">
    <property type="term" value="F:zinc ion binding"/>
    <property type="evidence" value="ECO:0007669"/>
    <property type="project" value="UniProtKB-KW"/>
</dbReference>
<dbReference type="GO" id="GO:0007420">
    <property type="term" value="P:brain development"/>
    <property type="evidence" value="ECO:0000315"/>
    <property type="project" value="UniProtKB"/>
</dbReference>
<dbReference type="GO" id="GO:0048854">
    <property type="term" value="P:brain morphogenesis"/>
    <property type="evidence" value="ECO:0000315"/>
    <property type="project" value="MGI"/>
</dbReference>
<dbReference type="GO" id="GO:0021895">
    <property type="term" value="P:cerebral cortex neuron differentiation"/>
    <property type="evidence" value="ECO:0000315"/>
    <property type="project" value="MGI"/>
</dbReference>
<dbReference type="GO" id="GO:0040029">
    <property type="term" value="P:epigenetic regulation of gene expression"/>
    <property type="evidence" value="ECO:0000250"/>
    <property type="project" value="UniProtKB"/>
</dbReference>
<dbReference type="GO" id="GO:0001701">
    <property type="term" value="P:in utero embryonic development"/>
    <property type="evidence" value="ECO:0000315"/>
    <property type="project" value="MGI"/>
</dbReference>
<dbReference type="GO" id="GO:0048812">
    <property type="term" value="P:neuron projection morphogenesis"/>
    <property type="evidence" value="ECO:0000315"/>
    <property type="project" value="UniProtKB"/>
</dbReference>
<dbReference type="GO" id="GO:0050671">
    <property type="term" value="P:positive regulation of lymphocyte proliferation"/>
    <property type="evidence" value="ECO:0000250"/>
    <property type="project" value="UniProtKB"/>
</dbReference>
<dbReference type="GO" id="GO:0002052">
    <property type="term" value="P:positive regulation of neuroblast proliferation"/>
    <property type="evidence" value="ECO:0000315"/>
    <property type="project" value="UniProtKB"/>
</dbReference>
<dbReference type="GO" id="GO:0010468">
    <property type="term" value="P:regulation of gene expression"/>
    <property type="evidence" value="ECO:0000314"/>
    <property type="project" value="MGI"/>
</dbReference>
<dbReference type="GO" id="GO:0050767">
    <property type="term" value="P:regulation of neurogenesis"/>
    <property type="evidence" value="ECO:0000315"/>
    <property type="project" value="MGI"/>
</dbReference>
<dbReference type="FunFam" id="3.30.160.60:FF:000444">
    <property type="entry name" value="Zinc finger protein 335"/>
    <property type="match status" value="1"/>
</dbReference>
<dbReference type="FunFam" id="3.30.160.60:FF:000764">
    <property type="entry name" value="Zinc finger protein 335"/>
    <property type="match status" value="1"/>
</dbReference>
<dbReference type="FunFam" id="3.30.160.60:FF:000796">
    <property type="entry name" value="Zinc finger protein 335"/>
    <property type="match status" value="1"/>
</dbReference>
<dbReference type="FunFam" id="3.30.160.60:FF:000930">
    <property type="entry name" value="Zinc finger protein 335"/>
    <property type="match status" value="1"/>
</dbReference>
<dbReference type="FunFam" id="3.30.160.60:FF:003059">
    <property type="entry name" value="Zinc finger protein 335"/>
    <property type="match status" value="1"/>
</dbReference>
<dbReference type="Gene3D" id="3.30.160.60">
    <property type="entry name" value="Classic Zinc Finger"/>
    <property type="match status" value="7"/>
</dbReference>
<dbReference type="InterPro" id="IPR050688">
    <property type="entry name" value="Zinc_finger/UBP_domain"/>
</dbReference>
<dbReference type="InterPro" id="IPR036236">
    <property type="entry name" value="Znf_C2H2_sf"/>
</dbReference>
<dbReference type="InterPro" id="IPR013087">
    <property type="entry name" value="Znf_C2H2_type"/>
</dbReference>
<dbReference type="PANTHER" id="PTHR24403">
    <property type="entry name" value="ZINC FINGER PROTEIN"/>
    <property type="match status" value="1"/>
</dbReference>
<dbReference type="PANTHER" id="PTHR24403:SF36">
    <property type="entry name" value="ZINC FINGER PROTEIN 335"/>
    <property type="match status" value="1"/>
</dbReference>
<dbReference type="Pfam" id="PF00096">
    <property type="entry name" value="zf-C2H2"/>
    <property type="match status" value="2"/>
</dbReference>
<dbReference type="Pfam" id="PF13912">
    <property type="entry name" value="zf-C2H2_6"/>
    <property type="match status" value="2"/>
</dbReference>
<dbReference type="Pfam" id="PF13909">
    <property type="entry name" value="zf-H2C2_5"/>
    <property type="match status" value="1"/>
</dbReference>
<dbReference type="SMART" id="SM00355">
    <property type="entry name" value="ZnF_C2H2"/>
    <property type="match status" value="13"/>
</dbReference>
<dbReference type="SUPFAM" id="SSF57667">
    <property type="entry name" value="beta-beta-alpha zinc fingers"/>
    <property type="match status" value="7"/>
</dbReference>
<dbReference type="PROSITE" id="PS00028">
    <property type="entry name" value="ZINC_FINGER_C2H2_1"/>
    <property type="match status" value="6"/>
</dbReference>
<dbReference type="PROSITE" id="PS50157">
    <property type="entry name" value="ZINC_FINGER_C2H2_2"/>
    <property type="match status" value="13"/>
</dbReference>
<protein>
    <recommendedName>
        <fullName>Zinc finger protein 335</fullName>
    </recommendedName>
    <alternativeName>
        <fullName>NRC-interacting factor 1</fullName>
        <shortName>NIF-1</shortName>
    </alternativeName>
</protein>
<comment type="function">
    <text evidence="2 5">Component or associated component of some histone methyltransferase complexes may regulate transcription through recruitment of those complexes on gene promoters (By similarity). Enhances ligand-dependent transcriptional activation by nuclear hormone receptors (By similarity). Plays an important role in neural progenitor cell proliferation and self-renewal through the regulation of specific genes involved brain development, including REST (PubMed:23178126). Also controls the expression of genes involved in somatic development and regulates, for instance, lymphoblast proliferation (By similarity).</text>
</comment>
<comment type="subunit">
    <text evidence="2 5">Interacts with NCOA6; may enhance ligand-dependent transcriptional activation by nuclear hormone receptors (By similarity). Interacts with CNOT6 (By similarity). Interacts with CNOT9; the interaction is direct (By similarity). Component of a nuclear receptor-mediated transcription complex composed of at least ZNF335, CCAR2 and EMSY; the complex stimulates the transcription of nuclear receptor target genes such as SOX9 and HOXA1 (By similarity). Within the complex interacts with EMSY and interacts (via C-terminus) with CCAR2 (By similarity). Interacts with members of histone H3'Lys4'(H3K4) methyltransferase complexes ASH2L, CXXC1, KMT2A/MLL1, RBBP5, SETD1A and WDR5 (PubMed:23178126). Component of a histone methylation complex composed of at least ZNF335, RBBP5, ASH2L and WDR5; the complex may have histone H3-specific methyltransferase activity, however does not have specificity for 'Lys-4' of histone H3 (By similarity). Interacts with RBBP5 and WDR5 (PubMed:23178126). Interacts with ASHL2 (By similarity). Components of this complex may associate with components of the ZNF335-CCAR2-EMSY nuclear receptor-mediated transcription complex to form a complex at least composed of ZNF335, HCFC1, CCAR2, EMSY, MKI67, RBBP5, ASH2L and WDR5 (By similarity). Within this complex also interacts with HCFC1 and MKI67 (By similarity).</text>
</comment>
<comment type="subcellular location">
    <subcellularLocation>
        <location evidence="5">Nucleus</location>
    </subcellularLocation>
</comment>
<comment type="tissue specificity">
    <text evidence="5">Expressed at low levels in cerebral cortex, hippocampus and cerebellum (at protein level).</text>
</comment>
<comment type="developmental stage">
    <text evidence="5">In brain, expression peaks at 13-15 dpc, during cortical neurogenesis. At 8.5 dpc, expressed in forebrain and midbrain. At 14.5 dpc, expressed in ventricular zone, subventricular zone and cortical plate.</text>
</comment>
<comment type="disruption phenotype">
    <text evidence="5">Loss leads to embryonic lethality as early as 7.5 dpc. Brain-specific conditional knockout produces a brain with an essentially absent cortex lacking all cortical neurons.</text>
</comment>
<comment type="similarity">
    <text evidence="6">Belongs to the krueppel C2H2-type zinc-finger protein family.</text>
</comment>
<keyword id="KW-0010">Activator</keyword>
<keyword id="KW-0217">Developmental protein</keyword>
<keyword id="KW-0238">DNA-binding</keyword>
<keyword id="KW-1017">Isopeptide bond</keyword>
<keyword id="KW-0479">Metal-binding</keyword>
<keyword id="KW-0539">Nucleus</keyword>
<keyword id="KW-0597">Phosphoprotein</keyword>
<keyword id="KW-1185">Reference proteome</keyword>
<keyword id="KW-0677">Repeat</keyword>
<keyword id="KW-0804">Transcription</keyword>
<keyword id="KW-0805">Transcription regulation</keyword>
<keyword id="KW-0832">Ubl conjugation</keyword>
<keyword id="KW-0862">Zinc</keyword>
<keyword id="KW-0863">Zinc-finger</keyword>
<reference key="1">
    <citation type="journal article" date="2005" name="Science">
        <title>The transcriptional landscape of the mammalian genome.</title>
        <authorList>
            <person name="Carninci P."/>
            <person name="Kasukawa T."/>
            <person name="Katayama S."/>
            <person name="Gough J."/>
            <person name="Frith M.C."/>
            <person name="Maeda N."/>
            <person name="Oyama R."/>
            <person name="Ravasi T."/>
            <person name="Lenhard B."/>
            <person name="Wells C."/>
            <person name="Kodzius R."/>
            <person name="Shimokawa K."/>
            <person name="Bajic V.B."/>
            <person name="Brenner S.E."/>
            <person name="Batalov S."/>
            <person name="Forrest A.R."/>
            <person name="Zavolan M."/>
            <person name="Davis M.J."/>
            <person name="Wilming L.G."/>
            <person name="Aidinis V."/>
            <person name="Allen J.E."/>
            <person name="Ambesi-Impiombato A."/>
            <person name="Apweiler R."/>
            <person name="Aturaliya R.N."/>
            <person name="Bailey T.L."/>
            <person name="Bansal M."/>
            <person name="Baxter L."/>
            <person name="Beisel K.W."/>
            <person name="Bersano T."/>
            <person name="Bono H."/>
            <person name="Chalk A.M."/>
            <person name="Chiu K.P."/>
            <person name="Choudhary V."/>
            <person name="Christoffels A."/>
            <person name="Clutterbuck D.R."/>
            <person name="Crowe M.L."/>
            <person name="Dalla E."/>
            <person name="Dalrymple B.P."/>
            <person name="de Bono B."/>
            <person name="Della Gatta G."/>
            <person name="di Bernardo D."/>
            <person name="Down T."/>
            <person name="Engstrom P."/>
            <person name="Fagiolini M."/>
            <person name="Faulkner G."/>
            <person name="Fletcher C.F."/>
            <person name="Fukushima T."/>
            <person name="Furuno M."/>
            <person name="Futaki S."/>
            <person name="Gariboldi M."/>
            <person name="Georgii-Hemming P."/>
            <person name="Gingeras T.R."/>
            <person name="Gojobori T."/>
            <person name="Green R.E."/>
            <person name="Gustincich S."/>
            <person name="Harbers M."/>
            <person name="Hayashi Y."/>
            <person name="Hensch T.K."/>
            <person name="Hirokawa N."/>
            <person name="Hill D."/>
            <person name="Huminiecki L."/>
            <person name="Iacono M."/>
            <person name="Ikeo K."/>
            <person name="Iwama A."/>
            <person name="Ishikawa T."/>
            <person name="Jakt M."/>
            <person name="Kanapin A."/>
            <person name="Katoh M."/>
            <person name="Kawasawa Y."/>
            <person name="Kelso J."/>
            <person name="Kitamura H."/>
            <person name="Kitano H."/>
            <person name="Kollias G."/>
            <person name="Krishnan S.P."/>
            <person name="Kruger A."/>
            <person name="Kummerfeld S.K."/>
            <person name="Kurochkin I.V."/>
            <person name="Lareau L.F."/>
            <person name="Lazarevic D."/>
            <person name="Lipovich L."/>
            <person name="Liu J."/>
            <person name="Liuni S."/>
            <person name="McWilliam S."/>
            <person name="Madan Babu M."/>
            <person name="Madera M."/>
            <person name="Marchionni L."/>
            <person name="Matsuda H."/>
            <person name="Matsuzawa S."/>
            <person name="Miki H."/>
            <person name="Mignone F."/>
            <person name="Miyake S."/>
            <person name="Morris K."/>
            <person name="Mottagui-Tabar S."/>
            <person name="Mulder N."/>
            <person name="Nakano N."/>
            <person name="Nakauchi H."/>
            <person name="Ng P."/>
            <person name="Nilsson R."/>
            <person name="Nishiguchi S."/>
            <person name="Nishikawa S."/>
            <person name="Nori F."/>
            <person name="Ohara O."/>
            <person name="Okazaki Y."/>
            <person name="Orlando V."/>
            <person name="Pang K.C."/>
            <person name="Pavan W.J."/>
            <person name="Pavesi G."/>
            <person name="Pesole G."/>
            <person name="Petrovsky N."/>
            <person name="Piazza S."/>
            <person name="Reed J."/>
            <person name="Reid J.F."/>
            <person name="Ring B.Z."/>
            <person name="Ringwald M."/>
            <person name="Rost B."/>
            <person name="Ruan Y."/>
            <person name="Salzberg S.L."/>
            <person name="Sandelin A."/>
            <person name="Schneider C."/>
            <person name="Schoenbach C."/>
            <person name="Sekiguchi K."/>
            <person name="Semple C.A."/>
            <person name="Seno S."/>
            <person name="Sessa L."/>
            <person name="Sheng Y."/>
            <person name="Shibata Y."/>
            <person name="Shimada H."/>
            <person name="Shimada K."/>
            <person name="Silva D."/>
            <person name="Sinclair B."/>
            <person name="Sperling S."/>
            <person name="Stupka E."/>
            <person name="Sugiura K."/>
            <person name="Sultana R."/>
            <person name="Takenaka Y."/>
            <person name="Taki K."/>
            <person name="Tammoja K."/>
            <person name="Tan S.L."/>
            <person name="Tang S."/>
            <person name="Taylor M.S."/>
            <person name="Tegner J."/>
            <person name="Teichmann S.A."/>
            <person name="Ueda H.R."/>
            <person name="van Nimwegen E."/>
            <person name="Verardo R."/>
            <person name="Wei C.L."/>
            <person name="Yagi K."/>
            <person name="Yamanishi H."/>
            <person name="Zabarovsky E."/>
            <person name="Zhu S."/>
            <person name="Zimmer A."/>
            <person name="Hide W."/>
            <person name="Bult C."/>
            <person name="Grimmond S.M."/>
            <person name="Teasdale R.D."/>
            <person name="Liu E.T."/>
            <person name="Brusic V."/>
            <person name="Quackenbush J."/>
            <person name="Wahlestedt C."/>
            <person name="Mattick J.S."/>
            <person name="Hume D.A."/>
            <person name="Kai C."/>
            <person name="Sasaki D."/>
            <person name="Tomaru Y."/>
            <person name="Fukuda S."/>
            <person name="Kanamori-Katayama M."/>
            <person name="Suzuki M."/>
            <person name="Aoki J."/>
            <person name="Arakawa T."/>
            <person name="Iida J."/>
            <person name="Imamura K."/>
            <person name="Itoh M."/>
            <person name="Kato T."/>
            <person name="Kawaji H."/>
            <person name="Kawagashira N."/>
            <person name="Kawashima T."/>
            <person name="Kojima M."/>
            <person name="Kondo S."/>
            <person name="Konno H."/>
            <person name="Nakano K."/>
            <person name="Ninomiya N."/>
            <person name="Nishio T."/>
            <person name="Okada M."/>
            <person name="Plessy C."/>
            <person name="Shibata K."/>
            <person name="Shiraki T."/>
            <person name="Suzuki S."/>
            <person name="Tagami M."/>
            <person name="Waki K."/>
            <person name="Watahiki A."/>
            <person name="Okamura-Oho Y."/>
            <person name="Suzuki H."/>
            <person name="Kawai J."/>
            <person name="Hayashizaki Y."/>
        </authorList>
    </citation>
    <scope>NUCLEOTIDE SEQUENCE [LARGE SCALE MRNA]</scope>
    <source>
        <strain>NOD</strain>
        <tissue>Spleen</tissue>
    </source>
</reference>
<reference key="2">
    <citation type="journal article" date="2009" name="PLoS Biol.">
        <title>Lineage-specific biology revealed by a finished genome assembly of the mouse.</title>
        <authorList>
            <person name="Church D.M."/>
            <person name="Goodstadt L."/>
            <person name="Hillier L.W."/>
            <person name="Zody M.C."/>
            <person name="Goldstein S."/>
            <person name="She X."/>
            <person name="Bult C.J."/>
            <person name="Agarwala R."/>
            <person name="Cherry J.L."/>
            <person name="DiCuccio M."/>
            <person name="Hlavina W."/>
            <person name="Kapustin Y."/>
            <person name="Meric P."/>
            <person name="Maglott D."/>
            <person name="Birtle Z."/>
            <person name="Marques A.C."/>
            <person name="Graves T."/>
            <person name="Zhou S."/>
            <person name="Teague B."/>
            <person name="Potamousis K."/>
            <person name="Churas C."/>
            <person name="Place M."/>
            <person name="Herschleb J."/>
            <person name="Runnheim R."/>
            <person name="Forrest D."/>
            <person name="Amos-Landgraf J."/>
            <person name="Schwartz D.C."/>
            <person name="Cheng Z."/>
            <person name="Lindblad-Toh K."/>
            <person name="Eichler E.E."/>
            <person name="Ponting C.P."/>
        </authorList>
    </citation>
    <scope>NUCLEOTIDE SEQUENCE [LARGE SCALE GENOMIC DNA]</scope>
    <source>
        <strain>C57BL/6J</strain>
    </source>
</reference>
<reference key="3">
    <citation type="journal article" date="2004" name="Genome Res.">
        <title>The status, quality, and expansion of the NIH full-length cDNA project: the Mammalian Gene Collection (MGC).</title>
        <authorList>
            <consortium name="The MGC Project Team"/>
        </authorList>
    </citation>
    <scope>NUCLEOTIDE SEQUENCE [LARGE SCALE MRNA]</scope>
    <source>
        <tissue>Brain</tissue>
    </source>
</reference>
<reference key="4">
    <citation type="journal article" date="2012" name="Cell">
        <title>Microcephaly gene links trithorax and REST/NRSF to control neural stem cell proliferation and differentiation.</title>
        <authorList>
            <person name="Yang Y.J."/>
            <person name="Baltus A.E."/>
            <person name="Mathew R.S."/>
            <person name="Murphy E.A."/>
            <person name="Evrony G.D."/>
            <person name="Gonzalez D.M."/>
            <person name="Wang E.P."/>
            <person name="Marshall-Walker C.A."/>
            <person name="Barry B.J."/>
            <person name="Murn J."/>
            <person name="Tatarakis A."/>
            <person name="Mahajan M.A."/>
            <person name="Samuels H.H."/>
            <person name="Shi Y."/>
            <person name="Golden J.A."/>
            <person name="Mahajnah M."/>
            <person name="Shenhav R."/>
            <person name="Walsh C.A."/>
        </authorList>
    </citation>
    <scope>FUNCTION IN NEUROGENESIS</scope>
    <scope>INTERACTION WITH RBBP5 AND WDR5</scope>
    <scope>SUBCELLULAR LOCATION</scope>
    <scope>TISSUE SPECIFICITY</scope>
    <scope>DEVELOPMENTAL STAGE</scope>
    <scope>DISRUPTION PHENOTYPE</scope>
</reference>